<evidence type="ECO:0000250" key="1">
    <source>
        <dbReference type="UniProtKB" id="P0C0S5"/>
    </source>
</evidence>
<evidence type="ECO:0000250" key="2">
    <source>
        <dbReference type="UniProtKB" id="P0C0S8"/>
    </source>
</evidence>
<evidence type="ECO:0000250" key="3">
    <source>
        <dbReference type="UniProtKB" id="P22752"/>
    </source>
</evidence>
<evidence type="ECO:0000250" key="4">
    <source>
        <dbReference type="UniProtKB" id="Q64523"/>
    </source>
</evidence>
<evidence type="ECO:0000256" key="5">
    <source>
        <dbReference type="SAM" id="MobiDB-lite"/>
    </source>
</evidence>
<evidence type="ECO:0000269" key="6">
    <source>
    </source>
</evidence>
<evidence type="ECO:0000269" key="7">
    <source>
    </source>
</evidence>
<evidence type="ECO:0000269" key="8">
    <source>
    </source>
</evidence>
<evidence type="ECO:0000269" key="9">
    <source>
    </source>
</evidence>
<evidence type="ECO:0000269" key="10">
    <source>
    </source>
</evidence>
<evidence type="ECO:0000269" key="11">
    <source>
    </source>
</evidence>
<evidence type="ECO:0000269" key="12">
    <source>
    </source>
</evidence>
<evidence type="ECO:0000269" key="13">
    <source>
    </source>
</evidence>
<evidence type="ECO:0000269" key="14">
    <source>
    </source>
</evidence>
<evidence type="ECO:0000269" key="15">
    <source>
    </source>
</evidence>
<evidence type="ECO:0000269" key="16">
    <source>
    </source>
</evidence>
<evidence type="ECO:0000269" key="17">
    <source>
    </source>
</evidence>
<evidence type="ECO:0000269" key="18">
    <source>
    </source>
</evidence>
<evidence type="ECO:0000269" key="19">
    <source>
    </source>
</evidence>
<evidence type="ECO:0000269" key="20">
    <source>
    </source>
</evidence>
<evidence type="ECO:0000269" key="21">
    <source>
    </source>
</evidence>
<evidence type="ECO:0000269" key="22">
    <source>
    </source>
</evidence>
<evidence type="ECO:0000269" key="23">
    <source>
    </source>
</evidence>
<evidence type="ECO:0000269" key="24">
    <source>
    </source>
</evidence>
<evidence type="ECO:0000269" key="25">
    <source>
    </source>
</evidence>
<evidence type="ECO:0000269" key="26">
    <source>
    </source>
</evidence>
<evidence type="ECO:0000269" key="27">
    <source>
    </source>
</evidence>
<evidence type="ECO:0000305" key="28"/>
<evidence type="ECO:0000312" key="29">
    <source>
        <dbReference type="HGNC" id="HGNC:4738"/>
    </source>
</evidence>
<evidence type="ECO:0007744" key="30">
    <source>
    </source>
</evidence>
<evidence type="ECO:0007829" key="31">
    <source>
        <dbReference type="PDB" id="7U0G"/>
    </source>
</evidence>
<gene>
    <name evidence="29" type="primary">H2AC20</name>
    <name type="synonym">H2AFQ</name>
    <name evidence="29" type="synonym">HIST2H2AC</name>
</gene>
<accession>Q16777</accession>
<accession>Q6DRA7</accession>
<accession>Q8IUE5</accession>
<comment type="function">
    <text>Core component of nucleosome. Nucleosomes wrap and compact DNA into chromatin, limiting DNA accessibility to the cellular machineries which require DNA as a template. Histones thereby play a central role in transcription regulation, DNA repair, DNA replication and chromosomal stability. DNA accessibility is regulated via a complex set of post-translational modifications of histones, also called histone code, and nucleosome remodeling.</text>
</comment>
<comment type="subunit">
    <text>The nucleosome is a histone octamer containing two molecules each of H2A, H2B, H3 and H4 assembled in one H3-H4 heterotetramer and two H2A-H2B heterodimers. The octamer wraps approximately 147 bp of DNA.</text>
</comment>
<comment type="subcellular location">
    <subcellularLocation>
        <location>Nucleus</location>
    </subcellularLocation>
    <subcellularLocation>
        <location>Chromosome</location>
    </subcellularLocation>
</comment>
<comment type="PTM">
    <text evidence="9">Deiminated on Arg-4 in granulocytes upon calcium entry.</text>
</comment>
<comment type="PTM">
    <text evidence="8 10 12 13 14 15 16 19 20 22 24 25">Monoubiquitination of Lys-120 (H2AK119Ub) by RING1, TRIM37 and RNF2/RING2 complex gives a specific tag for epigenetic transcriptional repression and participates in X chromosome inactivation of female mammals. It is involved in the initiation of both imprinted and random X inactivation. Ubiquitinated H2A is enriched in inactive X chromosome chromatin. Ubiquitination of H2A functions downstream of methylation of 'Lys-27' of histone H3 (H3K27me). H2AK119Ub by RNF2/RING2 can also be induced by ultraviolet and may be involved in DNA repair. Monoubiquitination of Lys-120 (H2AK119Ub) by TRIM37 may promote transformation of cells in a number of breast cancers (PubMed:25470042). Following DNA double-strand breaks (DSBs), it is ubiquitinated through 'Lys-63' linkage of ubiquitin moieties by the E2 ligase UBE2N and the E3 ligases RNF8 and RNF168, leading to the recruitment of repair proteins to sites of DNA damage. Ubiquitination at Lys-14 and Lys-16 (H2AK13Ub and H2AK15Ub, respectively) in response to DNA damage is initiated by RNF168 that mediates monoubiquitination at these 2 sites, and 'Lys-63'-linked ubiquitin are then conjugated to monoubiquitin; RNF8 is able to extend 'Lys-63'-linked ubiquitin chains in vitro. Deubiquitinated by USP51 at Lys-14 and Lys-16 (H2AK13Ub and H2AK15Ub, respectively) after damaged DNA is repaired (PubMed:27083998). H2AK119Ub and ionizing radiation-induced 'Lys-63'-linked ubiquitination (H2AK13Ub and H2AK15Ub) are distinct events.</text>
</comment>
<comment type="PTM">
    <text evidence="6 7 9 11 21">Phosphorylation on Ser-2 (H2AS1ph) is enhanced during mitosis. Phosphorylation on Ser-2 by RPS6KA5/MSK1 directly represses transcription. Acetylation of H3 inhibits Ser-2 phosphorylation by RPS6KA5/MSK1. Phosphorylation at Thr-121 (H2AT120ph) by DCAF1 is present in the regulatory region of many tumor suppresor genes and down-regulates their transcription.</text>
</comment>
<comment type="PTM">
    <text evidence="3">Symmetric dimethylation on Arg-4 by the PRDM1/PRMT5 complex may play a crucial role in the germ-cell lineage.</text>
</comment>
<comment type="PTM">
    <text evidence="22">Glutamine methylation at Gln-105 (H2AQ104me) by FBL is specifically dedicated to polymerase I. It is present at 35S ribosomal DNA locus and impairs binding of the FACT complex (PubMed:24352239).</text>
</comment>
<comment type="PTM">
    <text evidence="17">Crotonylation (Kcr) is specifically present in male germ cells and marks testis-specific genes in post-meiotic cells, including X-linked genes that escape sex chromosome inactivation in haploid cells. Crotonylation marks active promoters and enhancers and confers resistance to transcriptional repressors. It is also associated with post-meiotically activated genes on autosomes.</text>
</comment>
<comment type="PTM">
    <text evidence="1">Lactylated in macrophages by EP300/P300 by using lactoyl-CoA directly derived from endogenous or exogenous lactate, leading to stimulates gene transcription.</text>
</comment>
<comment type="mass spectrometry">
    <text>Monoisotopic with N-acetylserine.</text>
</comment>
<comment type="similarity">
    <text evidence="28">Belongs to the histone H2A family.</text>
</comment>
<feature type="initiator methionine" description="Removed" evidence="9 11">
    <location>
        <position position="1"/>
    </location>
</feature>
<feature type="chain" id="PRO_0000055238" description="Histone H2A type 2-C">
    <location>
        <begin position="2"/>
        <end position="129"/>
    </location>
</feature>
<feature type="region of interest" description="Disordered" evidence="5">
    <location>
        <begin position="1"/>
        <end position="22"/>
    </location>
</feature>
<feature type="compositionally biased region" description="Basic residues" evidence="5">
    <location>
        <begin position="7"/>
        <end position="19"/>
    </location>
</feature>
<feature type="modified residue" description="N-acetylserine" evidence="9 11">
    <location>
        <position position="2"/>
    </location>
</feature>
<feature type="modified residue" description="Phosphoserine; by RPS6KA5" evidence="2">
    <location>
        <position position="2"/>
    </location>
</feature>
<feature type="modified residue" description="Citrulline; alternate" evidence="9">
    <location>
        <position position="4"/>
    </location>
</feature>
<feature type="modified residue" description="Symmetric dimethylarginine; by PRMT5; alternate" evidence="4">
    <location>
        <position position="4"/>
    </location>
</feature>
<feature type="modified residue" description="N6-(2-hydroxyisobutyryl)lysine; alternate" evidence="23">
    <location>
        <position position="6"/>
    </location>
</feature>
<feature type="modified residue" description="N6-acetyllysine; alternate" evidence="11">
    <location>
        <position position="6"/>
    </location>
</feature>
<feature type="modified residue" description="N6-(2-hydroxyisobutyryl)lysine; alternate" evidence="23">
    <location>
        <position position="10"/>
    </location>
</feature>
<feature type="modified residue" description="N6-(beta-hydroxybutyryl)lysine; alternate" evidence="26">
    <location>
        <position position="10"/>
    </location>
</feature>
<feature type="modified residue" description="N6-lactoyllysine; alternate" evidence="1">
    <location>
        <position position="10"/>
    </location>
</feature>
<feature type="modified residue" description="N6-succinyllysine; alternate" evidence="18">
    <location>
        <position position="10"/>
    </location>
</feature>
<feature type="modified residue" description="N6-(beta-hydroxybutyryl)lysine; alternate" evidence="26">
    <location>
        <position position="14"/>
    </location>
</feature>
<feature type="modified residue" description="N6-(2-hydroxyisobutyryl)lysine; alternate" evidence="23">
    <location>
        <position position="37"/>
    </location>
</feature>
<feature type="modified residue" description="N6-(beta-hydroxybutyryl)lysine; alternate" evidence="26">
    <location>
        <position position="37"/>
    </location>
</feature>
<feature type="modified residue" description="N6-crotonyllysine; alternate" evidence="17">
    <location>
        <position position="37"/>
    </location>
</feature>
<feature type="modified residue" description="N6-(2-hydroxyisobutyryl)lysine" evidence="23">
    <location>
        <position position="75"/>
    </location>
</feature>
<feature type="modified residue" description="N6-(2-hydroxyisobutyryl)lysine" evidence="23">
    <location>
        <position position="76"/>
    </location>
</feature>
<feature type="modified residue" description="N6-(2-hydroxyisobutyryl)lysine; alternate" evidence="23">
    <location>
        <position position="96"/>
    </location>
</feature>
<feature type="modified residue" description="N6-(beta-hydroxybutyryl)lysine; alternate" evidence="26">
    <location>
        <position position="96"/>
    </location>
</feature>
<feature type="modified residue" description="N6-glutaryllysine; alternate" evidence="27">
    <location>
        <position position="96"/>
    </location>
</feature>
<feature type="modified residue" description="N6-succinyllysine; alternate" evidence="18">
    <location>
        <position position="96"/>
    </location>
</feature>
<feature type="modified residue" description="N6-glutaryllysine" evidence="27">
    <location>
        <position position="100"/>
    </location>
</feature>
<feature type="modified residue" description="N5-methylglutamine" evidence="22">
    <location>
        <position position="105"/>
    </location>
</feature>
<feature type="modified residue" description="N6-(2-hydroxyisobutyryl)lysine; alternate" evidence="23">
    <location>
        <position position="119"/>
    </location>
</feature>
<feature type="modified residue" description="N6-(beta-hydroxybutyryl)lysine; alternate" evidence="26">
    <location>
        <position position="119"/>
    </location>
</feature>
<feature type="modified residue" description="N6-crotonyllysine; alternate" evidence="17">
    <location>
        <position position="119"/>
    </location>
</feature>
<feature type="modified residue" description="N6-glutaryllysine; alternate" evidence="27">
    <location>
        <position position="119"/>
    </location>
</feature>
<feature type="modified residue" description="N6-crotonyllysine; alternate" evidence="17">
    <location>
        <position position="120"/>
    </location>
</feature>
<feature type="modified residue" description="N6-glutaryllysine; alternate" evidence="27">
    <location>
        <position position="120"/>
    </location>
</feature>
<feature type="modified residue" description="Phosphothreonine; by DCAF1" evidence="7 21 30">
    <location>
        <position position="121"/>
    </location>
</feature>
<feature type="modified residue" description="Phosphoserine" evidence="30">
    <location>
        <position position="123"/>
    </location>
</feature>
<feature type="modified residue" description="N6-crotonyllysine" evidence="17">
    <location>
        <position position="125"/>
    </location>
</feature>
<feature type="cross-link" description="Glycyl lysine isopeptide (Lys-Gly) (interchain with G-Cter in ubiquitin); alternate" evidence="19 20">
    <location>
        <position position="14"/>
    </location>
</feature>
<feature type="cross-link" description="Glycyl lysine isopeptide (Lys-Gly) (interchain with G-Cter in ubiquitin)" evidence="19 20">
    <location>
        <position position="16"/>
    </location>
</feature>
<feature type="cross-link" description="Glycyl lysine isopeptide (Lys-Gly) (interchain with G-Cter in ubiquitin); alternate" evidence="8 10 12 24">
    <location>
        <position position="120"/>
    </location>
</feature>
<feature type="mutagenesis site" description="Blocks the inhibition of transcription by RPS6KA5/MSK1." evidence="6">
    <original>S</original>
    <variation>A</variation>
    <location>
        <position position="2"/>
    </location>
</feature>
<feature type="helix" evidence="31">
    <location>
        <begin position="18"/>
        <end position="21"/>
    </location>
</feature>
<feature type="helix" evidence="31">
    <location>
        <begin position="28"/>
        <end position="37"/>
    </location>
</feature>
<feature type="strand" evidence="31">
    <location>
        <begin position="42"/>
        <end position="44"/>
    </location>
</feature>
<feature type="helix" evidence="31">
    <location>
        <begin position="48"/>
        <end position="72"/>
    </location>
</feature>
<feature type="turn" evidence="31">
    <location>
        <begin position="73"/>
        <end position="75"/>
    </location>
</feature>
<feature type="strand" evidence="31">
    <location>
        <begin position="77"/>
        <end position="79"/>
    </location>
</feature>
<feature type="helix" evidence="31">
    <location>
        <begin position="81"/>
        <end position="89"/>
    </location>
</feature>
<feature type="helix" evidence="31">
    <location>
        <begin position="92"/>
        <end position="97"/>
    </location>
</feature>
<feature type="turn" evidence="31">
    <location>
        <begin position="98"/>
        <end position="100"/>
    </location>
</feature>
<feature type="strand" evidence="31">
    <location>
        <begin position="101"/>
        <end position="103"/>
    </location>
</feature>
<feature type="turn" evidence="31">
    <location>
        <begin position="114"/>
        <end position="116"/>
    </location>
</feature>
<sequence>MSGRGKQGGKARAKAKSRSSRAGLQFPVGRVHRLLRKGNYAERVGAGAPVYMAAVLEYLTAEILELAGNAARDNKKTRIIPRHLQLAIRNDEELNKLLGKVTIAQGGVLPNIQAVLLPKKTESHKAKSK</sequence>
<organism>
    <name type="scientific">Homo sapiens</name>
    <name type="common">Human</name>
    <dbReference type="NCBI Taxonomy" id="9606"/>
    <lineage>
        <taxon>Eukaryota</taxon>
        <taxon>Metazoa</taxon>
        <taxon>Chordata</taxon>
        <taxon>Craniata</taxon>
        <taxon>Vertebrata</taxon>
        <taxon>Euteleostomi</taxon>
        <taxon>Mammalia</taxon>
        <taxon>Eutheria</taxon>
        <taxon>Euarchontoglires</taxon>
        <taxon>Primates</taxon>
        <taxon>Haplorrhini</taxon>
        <taxon>Catarrhini</taxon>
        <taxon>Hominidae</taxon>
        <taxon>Homo</taxon>
    </lineage>
</organism>
<protein>
    <recommendedName>
        <fullName>Histone H2A type 2-C</fullName>
    </recommendedName>
    <alternativeName>
        <fullName evidence="29">H2A-clustered histone 20</fullName>
    </alternativeName>
    <alternativeName>
        <fullName>Histone H2A-GL101</fullName>
    </alternativeName>
    <alternativeName>
        <fullName>Histone H2A/q</fullName>
    </alternativeName>
</protein>
<proteinExistence type="evidence at protein level"/>
<dbReference type="EMBL" id="AY131973">
    <property type="protein sequence ID" value="AAN59959.1"/>
    <property type="molecule type" value="Genomic_DNA"/>
</dbReference>
<dbReference type="EMBL" id="AY648852">
    <property type="protein sequence ID" value="AAT68255.1"/>
    <property type="molecule type" value="Genomic_DNA"/>
</dbReference>
<dbReference type="EMBL" id="AL591493">
    <property type="protein sequence ID" value="CAI12569.1"/>
    <property type="molecule type" value="Genomic_DNA"/>
</dbReference>
<dbReference type="EMBL" id="BC060324">
    <property type="protein sequence ID" value="AAH60324.1"/>
    <property type="molecule type" value="mRNA"/>
</dbReference>
<dbReference type="EMBL" id="X57985">
    <property type="protein sequence ID" value="CAA41050.1"/>
    <property type="molecule type" value="Genomic_DNA"/>
</dbReference>
<dbReference type="CCDS" id="CCDS937.1"/>
<dbReference type="PIR" id="I37466">
    <property type="entry name" value="I37466"/>
</dbReference>
<dbReference type="RefSeq" id="NP_003508.1">
    <property type="nucleotide sequence ID" value="NM_003517.3"/>
</dbReference>
<dbReference type="PDB" id="6Y5E">
    <property type="method" value="EM"/>
    <property type="resolution" value="3.15 A"/>
    <property type="chains" value="C=12-118, G=12-119"/>
</dbReference>
<dbReference type="PDB" id="7U0G">
    <property type="method" value="EM"/>
    <property type="resolution" value="2.60 A"/>
    <property type="chains" value="C/G=1-129"/>
</dbReference>
<dbReference type="PDB" id="7U0I">
    <property type="method" value="EM"/>
    <property type="resolution" value="2.60 A"/>
    <property type="chains" value="C/G=1-129"/>
</dbReference>
<dbReference type="PDB" id="7U0J">
    <property type="method" value="EM"/>
    <property type="resolution" value="2.70 A"/>
    <property type="chains" value="C/G=1-129"/>
</dbReference>
<dbReference type="PDB" id="8DK5">
    <property type="method" value="EM"/>
    <property type="resolution" value="2.71 A"/>
    <property type="chains" value="C/G=1-129"/>
</dbReference>
<dbReference type="PDB" id="8EVG">
    <property type="method" value="EM"/>
    <property type="resolution" value="2.75 A"/>
    <property type="chains" value="C/G=1-129"/>
</dbReference>
<dbReference type="PDB" id="8EVH">
    <property type="method" value="EM"/>
    <property type="resolution" value="2.85 A"/>
    <property type="chains" value="C/G=1-129"/>
</dbReference>
<dbReference type="PDB" id="8EVI">
    <property type="method" value="EM"/>
    <property type="resolution" value="2.64 A"/>
    <property type="chains" value="C/G=1-129"/>
</dbReference>
<dbReference type="PDB" id="8EVJ">
    <property type="method" value="EM"/>
    <property type="resolution" value="4.10 A"/>
    <property type="chains" value="C/G=1-129"/>
</dbReference>
<dbReference type="PDB" id="8SPS">
    <property type="method" value="EM"/>
    <property type="resolution" value="3.00 A"/>
    <property type="chains" value="C/G=1-129"/>
</dbReference>
<dbReference type="PDB" id="8SPU">
    <property type="method" value="EM"/>
    <property type="resolution" value="2.80 A"/>
    <property type="chains" value="C/G=1-129"/>
</dbReference>
<dbReference type="PDB" id="8SYP">
    <property type="method" value="EM"/>
    <property type="resolution" value="2.60 A"/>
    <property type="chains" value="C/G=1-129"/>
</dbReference>
<dbReference type="PDBsum" id="6Y5E"/>
<dbReference type="PDBsum" id="7U0G"/>
<dbReference type="PDBsum" id="7U0I"/>
<dbReference type="PDBsum" id="7U0J"/>
<dbReference type="PDBsum" id="8DK5"/>
<dbReference type="PDBsum" id="8EVG"/>
<dbReference type="PDBsum" id="8EVH"/>
<dbReference type="PDBsum" id="8EVI"/>
<dbReference type="PDBsum" id="8EVJ"/>
<dbReference type="PDBsum" id="8SPS"/>
<dbReference type="PDBsum" id="8SPU"/>
<dbReference type="PDBsum" id="8SYP"/>
<dbReference type="EMDB" id="EMD-10695"/>
<dbReference type="EMDB" id="EMD-11005"/>
<dbReference type="EMDB" id="EMD-11006"/>
<dbReference type="EMDB" id="EMD-26258"/>
<dbReference type="EMDB" id="EMD-26260"/>
<dbReference type="EMDB" id="EMD-26261"/>
<dbReference type="EMDB" id="EMD-27483"/>
<dbReference type="EMDB" id="EMD-28628"/>
<dbReference type="EMDB" id="EMD-28629"/>
<dbReference type="EMDB" id="EMD-28630"/>
<dbReference type="EMDB" id="EMD-28631"/>
<dbReference type="EMDB" id="EMD-40683"/>
<dbReference type="EMDB" id="EMD-40686"/>
<dbReference type="EMDB" id="EMD-40889"/>
<dbReference type="SMR" id="Q16777"/>
<dbReference type="BioGRID" id="113934">
    <property type="interactions" value="518"/>
</dbReference>
<dbReference type="CORUM" id="Q16777"/>
<dbReference type="FunCoup" id="Q16777">
    <property type="interactions" value="1149"/>
</dbReference>
<dbReference type="IntAct" id="Q16777">
    <property type="interactions" value="176"/>
</dbReference>
<dbReference type="MINT" id="Q16777"/>
<dbReference type="STRING" id="9606.ENSP00000332194"/>
<dbReference type="GlyGen" id="Q16777">
    <property type="glycosylation" value="1 site, 1 O-linked glycan (1 site)"/>
</dbReference>
<dbReference type="iPTMnet" id="Q16777"/>
<dbReference type="MetOSite" id="Q16777"/>
<dbReference type="PhosphoSitePlus" id="Q16777"/>
<dbReference type="SwissPalm" id="Q16777"/>
<dbReference type="BioMuta" id="HIST2H2AC"/>
<dbReference type="DMDM" id="47117890"/>
<dbReference type="jPOST" id="Q16777"/>
<dbReference type="MassIVE" id="Q16777"/>
<dbReference type="PaxDb" id="9606-ENSP00000332194"/>
<dbReference type="PeptideAtlas" id="Q16777"/>
<dbReference type="PRIDE" id="Q16777"/>
<dbReference type="ProteomicsDB" id="61066"/>
<dbReference type="Pumba" id="Q16777"/>
<dbReference type="TopDownProteomics" id="Q16777"/>
<dbReference type="Antibodypedia" id="34012">
    <property type="antibodies" value="150 antibodies from 19 providers"/>
</dbReference>
<dbReference type="DNASU" id="8338"/>
<dbReference type="Ensembl" id="ENST00000331380.4">
    <property type="protein sequence ID" value="ENSP00000332194.3"/>
    <property type="gene ID" value="ENSG00000184260.6"/>
</dbReference>
<dbReference type="GeneID" id="8338"/>
<dbReference type="KEGG" id="hsa:8338"/>
<dbReference type="MANE-Select" id="ENST00000331380.4">
    <property type="protein sequence ID" value="ENSP00000332194.3"/>
    <property type="RefSeq nucleotide sequence ID" value="NM_003517.3"/>
    <property type="RefSeq protein sequence ID" value="NP_003508.1"/>
</dbReference>
<dbReference type="UCSC" id="uc001etd.4">
    <property type="organism name" value="human"/>
</dbReference>
<dbReference type="AGR" id="HGNC:4738"/>
<dbReference type="CTD" id="8338"/>
<dbReference type="DisGeNET" id="8338"/>
<dbReference type="GeneCards" id="H2AC20"/>
<dbReference type="HGNC" id="HGNC:4738">
    <property type="gene designation" value="H2AC20"/>
</dbReference>
<dbReference type="HPA" id="ENSG00000184260">
    <property type="expression patterns" value="Tissue enriched (bone)"/>
</dbReference>
<dbReference type="MIM" id="602797">
    <property type="type" value="gene"/>
</dbReference>
<dbReference type="neXtProt" id="NX_Q16777"/>
<dbReference type="OpenTargets" id="ENSG00000184260"/>
<dbReference type="VEuPathDB" id="HostDB:ENSG00000184260"/>
<dbReference type="eggNOG" id="KOG1756">
    <property type="taxonomic scope" value="Eukaryota"/>
</dbReference>
<dbReference type="GeneTree" id="ENSGT00940000153118"/>
<dbReference type="HOGENOM" id="CLU_062828_3_1_1"/>
<dbReference type="InParanoid" id="Q16777"/>
<dbReference type="OMA" id="MPIAIHR"/>
<dbReference type="OrthoDB" id="9477400at2759"/>
<dbReference type="PAN-GO" id="Q16777">
    <property type="GO annotations" value="1 GO annotation based on evolutionary models"/>
</dbReference>
<dbReference type="PhylomeDB" id="Q16777"/>
<dbReference type="TreeFam" id="TF300137"/>
<dbReference type="PathwayCommons" id="Q16777"/>
<dbReference type="Reactome" id="R-HSA-110328">
    <property type="pathway name" value="Recognition and association of DNA glycosylase with site containing an affected pyrimidine"/>
</dbReference>
<dbReference type="Reactome" id="R-HSA-110329">
    <property type="pathway name" value="Cleavage of the damaged pyrimidine"/>
</dbReference>
<dbReference type="Reactome" id="R-HSA-110330">
    <property type="pathway name" value="Recognition and association of DNA glycosylase with site containing an affected purine"/>
</dbReference>
<dbReference type="Reactome" id="R-HSA-110331">
    <property type="pathway name" value="Cleavage of the damaged purine"/>
</dbReference>
<dbReference type="Reactome" id="R-HSA-1221632">
    <property type="pathway name" value="Meiotic synapsis"/>
</dbReference>
<dbReference type="Reactome" id="R-HSA-171306">
    <property type="pathway name" value="Packaging Of Telomere Ends"/>
</dbReference>
<dbReference type="Reactome" id="R-HSA-1912408">
    <property type="pathway name" value="Pre-NOTCH Transcription and Translation"/>
</dbReference>
<dbReference type="Reactome" id="R-HSA-201722">
    <property type="pathway name" value="Formation of the beta-catenin:TCF transactivating complex"/>
</dbReference>
<dbReference type="Reactome" id="R-HSA-212300">
    <property type="pathway name" value="PRC2 methylates histones and DNA"/>
</dbReference>
<dbReference type="Reactome" id="R-HSA-2299718">
    <property type="pathway name" value="Condensation of Prophase Chromosomes"/>
</dbReference>
<dbReference type="Reactome" id="R-HSA-2559580">
    <property type="pathway name" value="Oxidative Stress Induced Senescence"/>
</dbReference>
<dbReference type="Reactome" id="R-HSA-2559582">
    <property type="pathway name" value="Senescence-Associated Secretory Phenotype (SASP)"/>
</dbReference>
<dbReference type="Reactome" id="R-HSA-2559586">
    <property type="pathway name" value="DNA Damage/Telomere Stress Induced Senescence"/>
</dbReference>
<dbReference type="Reactome" id="R-HSA-3214815">
    <property type="pathway name" value="HDACs deacetylate histones"/>
</dbReference>
<dbReference type="Reactome" id="R-HSA-3214847">
    <property type="pathway name" value="HATs acetylate histones"/>
</dbReference>
<dbReference type="Reactome" id="R-HSA-3214858">
    <property type="pathway name" value="RMTs methylate histone arginines"/>
</dbReference>
<dbReference type="Reactome" id="R-HSA-427359">
    <property type="pathway name" value="SIRT1 negatively regulates rRNA expression"/>
</dbReference>
<dbReference type="Reactome" id="R-HSA-427389">
    <property type="pathway name" value="ERCC6 (CSB) and EHMT2 (G9a) positively regulate rRNA expression"/>
</dbReference>
<dbReference type="Reactome" id="R-HSA-427413">
    <property type="pathway name" value="NoRC negatively regulates rRNA expression"/>
</dbReference>
<dbReference type="Reactome" id="R-HSA-5250924">
    <property type="pathway name" value="B-WICH complex positively regulates rRNA expression"/>
</dbReference>
<dbReference type="Reactome" id="R-HSA-5334118">
    <property type="pathway name" value="DNA methylation"/>
</dbReference>
<dbReference type="Reactome" id="R-HSA-5578749">
    <property type="pathway name" value="Transcriptional regulation by small RNAs"/>
</dbReference>
<dbReference type="Reactome" id="R-HSA-5617472">
    <property type="pathway name" value="Activation of anterior HOX genes in hindbrain development during early embryogenesis"/>
</dbReference>
<dbReference type="Reactome" id="R-HSA-5625886">
    <property type="pathway name" value="Activated PKN1 stimulates transcription of AR (androgen receptor) regulated genes KLK2 and KLK3"/>
</dbReference>
<dbReference type="Reactome" id="R-HSA-5689603">
    <property type="pathway name" value="UCH proteinases"/>
</dbReference>
<dbReference type="Reactome" id="R-HSA-5689880">
    <property type="pathway name" value="Ub-specific processing proteases"/>
</dbReference>
<dbReference type="Reactome" id="R-HSA-5689901">
    <property type="pathway name" value="Metalloprotease DUBs"/>
</dbReference>
<dbReference type="Reactome" id="R-HSA-606279">
    <property type="pathway name" value="Deposition of new CENPA-containing nucleosomes at the centromere"/>
</dbReference>
<dbReference type="Reactome" id="R-HSA-68616">
    <property type="pathway name" value="Assembly of the ORC complex at the origin of replication"/>
</dbReference>
<dbReference type="Reactome" id="R-HSA-73728">
    <property type="pathway name" value="RNA Polymerase I Promoter Opening"/>
</dbReference>
<dbReference type="Reactome" id="R-HSA-73772">
    <property type="pathway name" value="RNA Polymerase I Promoter Escape"/>
</dbReference>
<dbReference type="Reactome" id="R-HSA-8936459">
    <property type="pathway name" value="RUNX1 regulates genes involved in megakaryocyte differentiation and platelet function"/>
</dbReference>
<dbReference type="Reactome" id="R-HSA-8939236">
    <property type="pathway name" value="RUNX1 regulates transcription of genes involved in differentiation of HSCs"/>
</dbReference>
<dbReference type="Reactome" id="R-HSA-9018519">
    <property type="pathway name" value="Estrogen-dependent gene expression"/>
</dbReference>
<dbReference type="Reactome" id="R-HSA-912446">
    <property type="pathway name" value="Meiotic recombination"/>
</dbReference>
<dbReference type="Reactome" id="R-HSA-9609690">
    <property type="pathway name" value="HCMV Early Events"/>
</dbReference>
<dbReference type="Reactome" id="R-HSA-9610379">
    <property type="pathway name" value="HCMV Late Events"/>
</dbReference>
<dbReference type="Reactome" id="R-HSA-9616222">
    <property type="pathway name" value="Transcriptional regulation of granulopoiesis"/>
</dbReference>
<dbReference type="Reactome" id="R-HSA-9670095">
    <property type="pathway name" value="Inhibition of DNA recombination at telomere"/>
</dbReference>
<dbReference type="Reactome" id="R-HSA-9710421">
    <property type="pathway name" value="Defective pyroptosis"/>
</dbReference>
<dbReference type="Reactome" id="R-HSA-977225">
    <property type="pathway name" value="Amyloid fiber formation"/>
</dbReference>
<dbReference type="Reactome" id="R-HSA-9821002">
    <property type="pathway name" value="Chromatin modifications during the maternal to zygotic transition (MZT)"/>
</dbReference>
<dbReference type="Reactome" id="R-HSA-9841922">
    <property type="pathway name" value="MLL4 and MLL3 complexes regulate expression of PPARG target genes in adipogenesis and hepatic steatosis"/>
</dbReference>
<dbReference type="Reactome" id="R-HSA-9843940">
    <property type="pathway name" value="Regulation of endogenous retroelements by KRAB-ZFP proteins"/>
</dbReference>
<dbReference type="Reactome" id="R-HSA-9843970">
    <property type="pathway name" value="Regulation of endogenous retroelements by the Human Silencing Hub (HUSH) complex"/>
</dbReference>
<dbReference type="Reactome" id="R-HSA-9845323">
    <property type="pathway name" value="Regulation of endogenous retroelements by Piwi-interacting RNAs (piRNAs)"/>
</dbReference>
<dbReference type="SignaLink" id="Q16777"/>
<dbReference type="SIGNOR" id="Q16777"/>
<dbReference type="BioGRID-ORCS" id="8338">
    <property type="hits" value="442 hits in 1059 CRISPR screens"/>
</dbReference>
<dbReference type="CD-CODE" id="91857CE7">
    <property type="entry name" value="Nucleolus"/>
</dbReference>
<dbReference type="GeneWiki" id="HIST2H2AC"/>
<dbReference type="GenomeRNAi" id="8338"/>
<dbReference type="Pharos" id="Q16777">
    <property type="development level" value="Tbio"/>
</dbReference>
<dbReference type="PRO" id="PR:Q16777"/>
<dbReference type="Proteomes" id="UP000005640">
    <property type="component" value="Chromosome 1"/>
</dbReference>
<dbReference type="RNAct" id="Q16777">
    <property type="molecule type" value="protein"/>
</dbReference>
<dbReference type="Bgee" id="ENSG00000184260">
    <property type="expression patterns" value="Expressed in calcaneal tendon and 101 other cell types or tissues"/>
</dbReference>
<dbReference type="GO" id="GO:0070062">
    <property type="term" value="C:extracellular exosome"/>
    <property type="evidence" value="ECO:0007005"/>
    <property type="project" value="UniProtKB"/>
</dbReference>
<dbReference type="GO" id="GO:0000786">
    <property type="term" value="C:nucleosome"/>
    <property type="evidence" value="ECO:0000318"/>
    <property type="project" value="GO_Central"/>
</dbReference>
<dbReference type="GO" id="GO:0005634">
    <property type="term" value="C:nucleus"/>
    <property type="evidence" value="ECO:0000314"/>
    <property type="project" value="UniProtKB"/>
</dbReference>
<dbReference type="GO" id="GO:0003677">
    <property type="term" value="F:DNA binding"/>
    <property type="evidence" value="ECO:0007669"/>
    <property type="project" value="UniProtKB-KW"/>
</dbReference>
<dbReference type="GO" id="GO:0046982">
    <property type="term" value="F:protein heterodimerization activity"/>
    <property type="evidence" value="ECO:0007669"/>
    <property type="project" value="InterPro"/>
</dbReference>
<dbReference type="GO" id="GO:0030527">
    <property type="term" value="F:structural constituent of chromatin"/>
    <property type="evidence" value="ECO:0000318"/>
    <property type="project" value="GO_Central"/>
</dbReference>
<dbReference type="GO" id="GO:0031507">
    <property type="term" value="P:heterochromatin formation"/>
    <property type="evidence" value="ECO:0000318"/>
    <property type="project" value="GO_Central"/>
</dbReference>
<dbReference type="CDD" id="cd00074">
    <property type="entry name" value="HFD_H2A"/>
    <property type="match status" value="1"/>
</dbReference>
<dbReference type="FunFam" id="1.10.20.10:FF:000004">
    <property type="entry name" value="Histone H2A"/>
    <property type="match status" value="1"/>
</dbReference>
<dbReference type="Gene3D" id="1.10.20.10">
    <property type="entry name" value="Histone, subunit A"/>
    <property type="match status" value="1"/>
</dbReference>
<dbReference type="InterPro" id="IPR009072">
    <property type="entry name" value="Histone-fold"/>
</dbReference>
<dbReference type="InterPro" id="IPR002119">
    <property type="entry name" value="Histone_H2A"/>
</dbReference>
<dbReference type="InterPro" id="IPR007125">
    <property type="entry name" value="Histone_H2A/H2B/H3"/>
</dbReference>
<dbReference type="InterPro" id="IPR032454">
    <property type="entry name" value="Histone_H2A_C"/>
</dbReference>
<dbReference type="InterPro" id="IPR032458">
    <property type="entry name" value="Histone_H2A_CS"/>
</dbReference>
<dbReference type="PANTHER" id="PTHR23430">
    <property type="entry name" value="HISTONE H2A"/>
    <property type="match status" value="1"/>
</dbReference>
<dbReference type="Pfam" id="PF00125">
    <property type="entry name" value="Histone"/>
    <property type="match status" value="1"/>
</dbReference>
<dbReference type="Pfam" id="PF16211">
    <property type="entry name" value="Histone_H2A_C"/>
    <property type="match status" value="1"/>
</dbReference>
<dbReference type="PRINTS" id="PR00620">
    <property type="entry name" value="HISTONEH2A"/>
</dbReference>
<dbReference type="SMART" id="SM00414">
    <property type="entry name" value="H2A"/>
    <property type="match status" value="1"/>
</dbReference>
<dbReference type="SUPFAM" id="SSF47113">
    <property type="entry name" value="Histone-fold"/>
    <property type="match status" value="1"/>
</dbReference>
<dbReference type="PROSITE" id="PS00046">
    <property type="entry name" value="HISTONE_H2A"/>
    <property type="match status" value="1"/>
</dbReference>
<keyword id="KW-0002">3D-structure</keyword>
<keyword id="KW-0007">Acetylation</keyword>
<keyword id="KW-0158">Chromosome</keyword>
<keyword id="KW-0164">Citrullination</keyword>
<keyword id="KW-0238">DNA-binding</keyword>
<keyword id="KW-0379">Hydroxylation</keyword>
<keyword id="KW-1017">Isopeptide bond</keyword>
<keyword id="KW-0488">Methylation</keyword>
<keyword id="KW-0544">Nucleosome core</keyword>
<keyword id="KW-0539">Nucleus</keyword>
<keyword id="KW-0597">Phosphoprotein</keyword>
<keyword id="KW-1267">Proteomics identification</keyword>
<keyword id="KW-1185">Reference proteome</keyword>
<keyword id="KW-0832">Ubl conjugation</keyword>
<reference key="1">
    <citation type="journal article" date="2002" name="Genomics">
        <title>The human and mouse replication-dependent histone genes.</title>
        <authorList>
            <person name="Marzluff W.F."/>
            <person name="Gongidi P."/>
            <person name="Woods K.R."/>
            <person name="Jin J."/>
            <person name="Maltais L.J."/>
        </authorList>
    </citation>
    <scope>NUCLEOTIDE SEQUENCE [GENOMIC DNA]</scope>
</reference>
<reference key="2">
    <citation type="journal article" date="2004" name="Gene">
        <title>Functional characterization of a human histone gene cluster duplication.</title>
        <authorList>
            <person name="Braastad C.D."/>
            <person name="Hovhannisyan H."/>
            <person name="van Wijnen A.J."/>
            <person name="Stein J.L."/>
            <person name="Stein G.S."/>
        </authorList>
    </citation>
    <scope>NUCLEOTIDE SEQUENCE [GENOMIC DNA]</scope>
</reference>
<reference key="3">
    <citation type="journal article" date="2006" name="Nature">
        <title>The DNA sequence and biological annotation of human chromosome 1.</title>
        <authorList>
            <person name="Gregory S.G."/>
            <person name="Barlow K.F."/>
            <person name="McLay K.E."/>
            <person name="Kaul R."/>
            <person name="Swarbreck D."/>
            <person name="Dunham A."/>
            <person name="Scott C.E."/>
            <person name="Howe K.L."/>
            <person name="Woodfine K."/>
            <person name="Spencer C.C.A."/>
            <person name="Jones M.C."/>
            <person name="Gillson C."/>
            <person name="Searle S."/>
            <person name="Zhou Y."/>
            <person name="Kokocinski F."/>
            <person name="McDonald L."/>
            <person name="Evans R."/>
            <person name="Phillips K."/>
            <person name="Atkinson A."/>
            <person name="Cooper R."/>
            <person name="Jones C."/>
            <person name="Hall R.E."/>
            <person name="Andrews T.D."/>
            <person name="Lloyd C."/>
            <person name="Ainscough R."/>
            <person name="Almeida J.P."/>
            <person name="Ambrose K.D."/>
            <person name="Anderson F."/>
            <person name="Andrew R.W."/>
            <person name="Ashwell R.I.S."/>
            <person name="Aubin K."/>
            <person name="Babbage A.K."/>
            <person name="Bagguley C.L."/>
            <person name="Bailey J."/>
            <person name="Beasley H."/>
            <person name="Bethel G."/>
            <person name="Bird C.P."/>
            <person name="Bray-Allen S."/>
            <person name="Brown J.Y."/>
            <person name="Brown A.J."/>
            <person name="Buckley D."/>
            <person name="Burton J."/>
            <person name="Bye J."/>
            <person name="Carder C."/>
            <person name="Chapman J.C."/>
            <person name="Clark S.Y."/>
            <person name="Clarke G."/>
            <person name="Clee C."/>
            <person name="Cobley V."/>
            <person name="Collier R.E."/>
            <person name="Corby N."/>
            <person name="Coville G.J."/>
            <person name="Davies J."/>
            <person name="Deadman R."/>
            <person name="Dunn M."/>
            <person name="Earthrowl M."/>
            <person name="Ellington A.G."/>
            <person name="Errington H."/>
            <person name="Frankish A."/>
            <person name="Frankland J."/>
            <person name="French L."/>
            <person name="Garner P."/>
            <person name="Garnett J."/>
            <person name="Gay L."/>
            <person name="Ghori M.R.J."/>
            <person name="Gibson R."/>
            <person name="Gilby L.M."/>
            <person name="Gillett W."/>
            <person name="Glithero R.J."/>
            <person name="Grafham D.V."/>
            <person name="Griffiths C."/>
            <person name="Griffiths-Jones S."/>
            <person name="Grocock R."/>
            <person name="Hammond S."/>
            <person name="Harrison E.S.I."/>
            <person name="Hart E."/>
            <person name="Haugen E."/>
            <person name="Heath P.D."/>
            <person name="Holmes S."/>
            <person name="Holt K."/>
            <person name="Howden P.J."/>
            <person name="Hunt A.R."/>
            <person name="Hunt S.E."/>
            <person name="Hunter G."/>
            <person name="Isherwood J."/>
            <person name="James R."/>
            <person name="Johnson C."/>
            <person name="Johnson D."/>
            <person name="Joy A."/>
            <person name="Kay M."/>
            <person name="Kershaw J.K."/>
            <person name="Kibukawa M."/>
            <person name="Kimberley A.M."/>
            <person name="King A."/>
            <person name="Knights A.J."/>
            <person name="Lad H."/>
            <person name="Laird G."/>
            <person name="Lawlor S."/>
            <person name="Leongamornlert D.A."/>
            <person name="Lloyd D.M."/>
            <person name="Loveland J."/>
            <person name="Lovell J."/>
            <person name="Lush M.J."/>
            <person name="Lyne R."/>
            <person name="Martin S."/>
            <person name="Mashreghi-Mohammadi M."/>
            <person name="Matthews L."/>
            <person name="Matthews N.S.W."/>
            <person name="McLaren S."/>
            <person name="Milne S."/>
            <person name="Mistry S."/>
            <person name="Moore M.J.F."/>
            <person name="Nickerson T."/>
            <person name="O'Dell C.N."/>
            <person name="Oliver K."/>
            <person name="Palmeiri A."/>
            <person name="Palmer S.A."/>
            <person name="Parker A."/>
            <person name="Patel D."/>
            <person name="Pearce A.V."/>
            <person name="Peck A.I."/>
            <person name="Pelan S."/>
            <person name="Phelps K."/>
            <person name="Phillimore B.J."/>
            <person name="Plumb R."/>
            <person name="Rajan J."/>
            <person name="Raymond C."/>
            <person name="Rouse G."/>
            <person name="Saenphimmachak C."/>
            <person name="Sehra H.K."/>
            <person name="Sheridan E."/>
            <person name="Shownkeen R."/>
            <person name="Sims S."/>
            <person name="Skuce C.D."/>
            <person name="Smith M."/>
            <person name="Steward C."/>
            <person name="Subramanian S."/>
            <person name="Sycamore N."/>
            <person name="Tracey A."/>
            <person name="Tromans A."/>
            <person name="Van Helmond Z."/>
            <person name="Wall M."/>
            <person name="Wallis J.M."/>
            <person name="White S."/>
            <person name="Whitehead S.L."/>
            <person name="Wilkinson J.E."/>
            <person name="Willey D.L."/>
            <person name="Williams H."/>
            <person name="Wilming L."/>
            <person name="Wray P.W."/>
            <person name="Wu Z."/>
            <person name="Coulson A."/>
            <person name="Vaudin M."/>
            <person name="Sulston J.E."/>
            <person name="Durbin R.M."/>
            <person name="Hubbard T."/>
            <person name="Wooster R."/>
            <person name="Dunham I."/>
            <person name="Carter N.P."/>
            <person name="McVean G."/>
            <person name="Ross M.T."/>
            <person name="Harrow J."/>
            <person name="Olson M.V."/>
            <person name="Beck S."/>
            <person name="Rogers J."/>
            <person name="Bentley D.R."/>
        </authorList>
    </citation>
    <scope>NUCLEOTIDE SEQUENCE [LARGE SCALE GENOMIC DNA]</scope>
</reference>
<reference key="4">
    <citation type="journal article" date="2004" name="Genome Res.">
        <title>The status, quality, and expansion of the NIH full-length cDNA project: the Mammalian Gene Collection (MGC).</title>
        <authorList>
            <consortium name="The MGC Project Team"/>
        </authorList>
    </citation>
    <scope>NUCLEOTIDE SEQUENCE [LARGE SCALE MRNA]</scope>
    <source>
        <tissue>Lung</tissue>
    </source>
</reference>
<reference key="5">
    <citation type="journal article" date="1992" name="J. Cell. Biochem.">
        <title>A human histone H2B.1 variant gene, located on chromosome 1, utilizes alternative 3' end processing.</title>
        <authorList>
            <person name="Collart D."/>
            <person name="Romain P.L."/>
            <person name="Huebner K."/>
            <person name="Pockwinse S."/>
            <person name="Pilapil S."/>
            <person name="Cannizzaro L.A."/>
            <person name="Lian J.B."/>
            <person name="Croce C.M."/>
            <person name="Stein J.L."/>
            <person name="Stein G.S."/>
        </authorList>
    </citation>
    <scope>NUCLEOTIDE SEQUENCE [GENOMIC DNA] OF 1-57</scope>
    <source>
        <tissue>Lymphocyte</tissue>
    </source>
</reference>
<reference key="6">
    <citation type="journal article" date="2004" name="Genes Dev.">
        <title>Nucleosomal histone kinase-1 phosphorylates H2A Thr 119 during mitosis in the early Drosophila embryo.</title>
        <authorList>
            <person name="Aihara H."/>
            <person name="Nakagawa T."/>
            <person name="Yasui K."/>
            <person name="Ohta T."/>
            <person name="Hirose S."/>
            <person name="Dhomae N."/>
            <person name="Takio K."/>
            <person name="Kaneko M."/>
            <person name="Takeshima Y."/>
            <person name="Muramatsu M."/>
            <person name="Ito T."/>
        </authorList>
    </citation>
    <scope>PHOSPHORYLATION AT THR-121</scope>
</reference>
<reference key="7">
    <citation type="journal article" date="2004" name="J. Biol. Chem.">
        <title>Phosphorylation of histone H2A inhibits transcription on chromatin templates.</title>
        <authorList>
            <person name="Zhang Y."/>
            <person name="Griffin K."/>
            <person name="Mondal N."/>
            <person name="Parvin J.D."/>
        </authorList>
    </citation>
    <scope>PHOSPHORYLATION AT SER-2</scope>
    <scope>MUTAGENESIS OF SER-2</scope>
</reference>
<reference key="8">
    <citation type="journal article" date="2004" name="Nature">
        <title>Role of histone H2A ubiquitination in Polycomb silencing.</title>
        <authorList>
            <person name="Wang H."/>
            <person name="Wang L."/>
            <person name="Erdjument-Bromage H."/>
            <person name="Vidal M."/>
            <person name="Tempst P."/>
            <person name="Jones R.S."/>
            <person name="Zhang Y."/>
        </authorList>
    </citation>
    <scope>UBIQUITINATION AT LYS-120</scope>
</reference>
<reference key="9">
    <citation type="journal article" date="2005" name="Biochemistry">
        <title>Deimination of histone H2A and H4 at arginine 3 in HL-60 granulocytes.</title>
        <authorList>
            <person name="Hagiwara T."/>
            <person name="Hidaka Y."/>
            <person name="Yamada M."/>
        </authorList>
    </citation>
    <scope>ACETYLATION AT SER-2</scope>
    <scope>CITRULLINATION AT ARG-4</scope>
    <scope>IDENTIFICATION BY MASS SPECTROMETRY</scope>
</reference>
<reference key="10">
    <citation type="journal article" date="2005" name="Mol. Cell">
        <title>Role of Bmi-1 and Ring1A in H2A ubiquitylation and Hox gene silencing.</title>
        <authorList>
            <person name="Cao R."/>
            <person name="Tsukada Y."/>
            <person name="Zhang Y."/>
        </authorList>
    </citation>
    <scope>UBIQUITINATION AT LYS-120</scope>
</reference>
<reference key="11">
    <citation type="journal article" date="2006" name="Genes Dev.">
        <title>DNA damage triggers nucleotide excision repair-dependent monoubiquitylation of histone H2A.</title>
        <authorList>
            <person name="Bergink S."/>
            <person name="Salomons F.A."/>
            <person name="Hoogstraten D."/>
            <person name="Groothuis T.A.M."/>
            <person name="de Waard H."/>
            <person name="Wu J."/>
            <person name="Yuan L."/>
            <person name="Citterio E."/>
            <person name="Houtsmuller A.B."/>
            <person name="Neefjes J."/>
            <person name="Hoeijmakers J.H.J."/>
            <person name="Vermeulen W."/>
            <person name="Dantuma N.P."/>
        </authorList>
    </citation>
    <scope>UBIQUITINATION AT LYS-120</scope>
</reference>
<reference key="12">
    <citation type="journal article" date="2006" name="J. Proteome Res.">
        <title>Precise characterization of human histones in the H2A gene family by top down mass spectrometry.</title>
        <authorList>
            <person name="Boyne M.T. II"/>
            <person name="Pesavento J.J."/>
            <person name="Mizzen C.A."/>
            <person name="Kelleher N.L."/>
        </authorList>
    </citation>
    <scope>MASS SPECTROMETRY</scope>
    <scope>ACETYLATION AT SER-2 AND LYS-6</scope>
</reference>
<reference key="13">
    <citation type="journal article" date="2006" name="Mol. Cell. Proteomics">
        <title>Characterization of histones H2A and H2B variants and their post-translational modifications by mass spectrometry.</title>
        <authorList>
            <person name="Bonenfant D."/>
            <person name="Coulot M."/>
            <person name="Towbin H."/>
            <person name="Schindler P."/>
            <person name="van Oostrum J."/>
        </authorList>
    </citation>
    <scope>IDENTIFICATION BY MASS SPECTROMETRY [LARGE SCALE ANALYSIS]</scope>
</reference>
<reference key="14">
    <citation type="journal article" date="2007" name="Cell">
        <title>RNF8 ubiquitylates histones at DNA double-strand breaks and promotes assembly of repair proteins.</title>
        <authorList>
            <person name="Mailand N."/>
            <person name="Bekker-Jensen S."/>
            <person name="Faustrup H."/>
            <person name="Melander F."/>
            <person name="Bartek J."/>
            <person name="Lukas C."/>
            <person name="Lukas J."/>
        </authorList>
    </citation>
    <scope>UBIQUITINATION</scope>
</reference>
<reference key="15">
    <citation type="journal article" date="2007" name="Cell">
        <title>RNF8 transduces the DNA-damage signal via histone ubiquitylation and checkpoint protein assembly.</title>
        <authorList>
            <person name="Huen M.S.Y."/>
            <person name="Grant R."/>
            <person name="Manke I."/>
            <person name="Minn K."/>
            <person name="Yu X."/>
            <person name="Yaffe M.B."/>
            <person name="Chen J."/>
        </authorList>
    </citation>
    <scope>UBIQUITINATION</scope>
</reference>
<reference key="16">
    <citation type="journal article" date="2008" name="Proc. Natl. Acad. Sci. U.S.A.">
        <title>A quantitative atlas of mitotic phosphorylation.</title>
        <authorList>
            <person name="Dephoure N."/>
            <person name="Zhou C."/>
            <person name="Villen J."/>
            <person name="Beausoleil S.A."/>
            <person name="Bakalarski C.E."/>
            <person name="Elledge S.J."/>
            <person name="Gygi S.P."/>
        </authorList>
    </citation>
    <scope>PHOSPHORYLATION [LARGE SCALE ANALYSIS] AT THR-121 AND SER-123</scope>
    <scope>IDENTIFICATION BY MASS SPECTROMETRY [LARGE SCALE ANALYSIS]</scope>
    <source>
        <tissue>Cervix carcinoma</tissue>
    </source>
</reference>
<reference key="17">
    <citation type="journal article" date="2009" name="Cell">
        <title>The RIDDLE syndrome protein mediates a ubiquitin-dependent signaling cascade at sites of DNA damage.</title>
        <authorList>
            <person name="Stewart G.S."/>
            <person name="Panier S."/>
            <person name="Townsend K."/>
            <person name="Al-Hakim A.K."/>
            <person name="Kolas N.K."/>
            <person name="Miller E.S."/>
            <person name="Nakada S."/>
            <person name="Ylanko J."/>
            <person name="Olivarius S."/>
            <person name="Mendez M."/>
            <person name="Oldreive C."/>
            <person name="Wildenhain J."/>
            <person name="Tagliaferro A."/>
            <person name="Pelletier L."/>
            <person name="Taubenheim N."/>
            <person name="Durandy A."/>
            <person name="Byrd P.J."/>
            <person name="Stankovic T."/>
            <person name="Taylor A.M.R."/>
            <person name="Durocher D."/>
        </authorList>
    </citation>
    <scope>UBIQUITINATION</scope>
</reference>
<reference key="18">
    <citation type="journal article" date="2009" name="Cell">
        <title>RNF168 binds and amplifies ubiquitin conjugates on damaged chromosomes to allow accumulation of repair proteins.</title>
        <authorList>
            <person name="Doil C."/>
            <person name="Mailand N."/>
            <person name="Bekker-Jensen S."/>
            <person name="Menard P."/>
            <person name="Larsen D.H."/>
            <person name="Pepperkok R."/>
            <person name="Ellenberg J."/>
            <person name="Panier S."/>
            <person name="Durocher D."/>
            <person name="Bartek J."/>
            <person name="Lukas J."/>
            <person name="Lukas C."/>
        </authorList>
    </citation>
    <scope>UBIQUITINATION</scope>
</reference>
<reference key="19">
    <citation type="journal article" date="2011" name="Cell">
        <title>Identification of 67 histone marks and histone lysine crotonylation as a new type of histone modification.</title>
        <authorList>
            <person name="Tan M."/>
            <person name="Luo H."/>
            <person name="Lee S."/>
            <person name="Jin F."/>
            <person name="Yang J.S."/>
            <person name="Montellier E."/>
            <person name="Buchou T."/>
            <person name="Cheng Z."/>
            <person name="Rousseaux S."/>
            <person name="Rajagopal N."/>
            <person name="Lu Z."/>
            <person name="Ye Z."/>
            <person name="Zhu Q."/>
            <person name="Wysocka J."/>
            <person name="Ye Y."/>
            <person name="Khochbin S."/>
            <person name="Ren B."/>
            <person name="Zhao Y."/>
        </authorList>
    </citation>
    <scope>CROTONYLATION AT LYS-37; LYS-119; LYS-120 AND LYS-125</scope>
</reference>
<reference key="20">
    <citation type="journal article" date="2012" name="Cell">
        <title>RNF168 ubiquitinates K13-15 on H2A/H2AX to drive DNA Damage signaling.</title>
        <authorList>
            <person name="Mattiroli F."/>
            <person name="Vissers J.H."/>
            <person name="van Dijk W.J."/>
            <person name="Ikpa P."/>
            <person name="Citterio E."/>
            <person name="Vermeulen W."/>
            <person name="Marteijn J.A."/>
            <person name="Sixma T.K."/>
        </authorList>
    </citation>
    <scope>UBIQUITINATION AT LYS-14 AND LYS-16 BY RNF168</scope>
</reference>
<reference key="21">
    <citation type="journal article" date="2012" name="Cell Cycle">
        <title>A novel ubiquitin mark at the N-terminal tail of histone H2As targeted by RNF168 ubiquitin ligase.</title>
        <authorList>
            <person name="Gatti M."/>
            <person name="Pinato S."/>
            <person name="Maspero E."/>
            <person name="Soffientini P."/>
            <person name="Polo S."/>
            <person name="Penengo L."/>
        </authorList>
    </citation>
    <scope>UBIQUITINATION AT LYS-14 AND LYS-16 BY RNF168</scope>
</reference>
<reference key="22">
    <citation type="journal article" date="2012" name="Mol. Cell. Proteomics">
        <title>Lysine succinylation and lysine malonylation in histones.</title>
        <authorList>
            <person name="Xie Z."/>
            <person name="Dai J."/>
            <person name="Dai L."/>
            <person name="Tan M."/>
            <person name="Cheng Z."/>
            <person name="Wu Y."/>
            <person name="Boeke J.D."/>
            <person name="Zhao Y."/>
        </authorList>
    </citation>
    <scope>SUCCINYLATION AT LYS-10 AND LYS-96</scope>
</reference>
<reference key="23">
    <citation type="journal article" date="2013" name="Mol. Cell">
        <title>VprBP has intrinsic kinase activity targeting histone H2A and represses gene transcription.</title>
        <authorList>
            <person name="Kim K."/>
            <person name="Kim J.M."/>
            <person name="Kim J.S."/>
            <person name="Choi J."/>
            <person name="Lee Y.S."/>
            <person name="Neamati N."/>
            <person name="Song J.S."/>
            <person name="Heo K."/>
            <person name="An W."/>
        </authorList>
    </citation>
    <scope>PHOSPHORYLATION AT THR-121</scope>
</reference>
<reference key="24">
    <citation type="journal article" date="2014" name="Nat. Chem. Biol.">
        <title>Lysine 2-hydroxyisobutyrylation is a widely distributed active histone mark.</title>
        <authorList>
            <person name="Dai L."/>
            <person name="Peng C."/>
            <person name="Montellier E."/>
            <person name="Lu Z."/>
            <person name="Chen Y."/>
            <person name="Ishii H."/>
            <person name="Debernardi A."/>
            <person name="Buchou T."/>
            <person name="Rousseaux S."/>
            <person name="Jin F."/>
            <person name="Sabari B.R."/>
            <person name="Deng Z."/>
            <person name="Allis C.D."/>
            <person name="Ren B."/>
            <person name="Khochbin S."/>
            <person name="Zhao Y."/>
        </authorList>
    </citation>
    <scope>HYDROXYBUTYRYLATION AT LYS-6; LYS-10; LYS-37; LYS-75; LYS-76; LYS-96 AND LYS-119</scope>
</reference>
<reference key="25">
    <citation type="journal article" date="2014" name="Nature">
        <title>Glutamine methylation in histone H2A is an RNA-polymerase-I-dedicated modification.</title>
        <authorList>
            <person name="Tessarz P."/>
            <person name="Santos-Rosa H."/>
            <person name="Robson S.C."/>
            <person name="Sylvestersen K.B."/>
            <person name="Nelson C.J."/>
            <person name="Nielsen M.L."/>
            <person name="Kouzarides T."/>
        </authorList>
    </citation>
    <scope>METHYLATION AT GLN-105</scope>
</reference>
<reference key="26">
    <citation type="journal article" date="2014" name="Nature">
        <title>TRIM37 is a new histone H2A ubiquitin ligase and breast cancer oncoprotein.</title>
        <authorList>
            <person name="Bhatnagar S."/>
            <person name="Gazin C."/>
            <person name="Chamberlain L."/>
            <person name="Ou J."/>
            <person name="Zhu X."/>
            <person name="Tushir J.S."/>
            <person name="Virbasius C.M."/>
            <person name="Lin L."/>
            <person name="Zhu L.J."/>
            <person name="Wajapeyee N."/>
            <person name="Green M.R."/>
        </authorList>
    </citation>
    <scope>UBIQUITINATION AT LYS-120</scope>
</reference>
<reference key="27">
    <citation type="journal article" date="2016" name="Genes Dev.">
        <title>USP51 deubiquitylates H2AK13,15ub and regulates DNA damage response.</title>
        <authorList>
            <person name="Wang Z."/>
            <person name="Zhang H."/>
            <person name="Liu J."/>
            <person name="Cheruiyot A."/>
            <person name="Lee J.H."/>
            <person name="Ordog T."/>
            <person name="Lou Z."/>
            <person name="You Z."/>
            <person name="Zhang Z."/>
        </authorList>
    </citation>
    <scope>DEUBIQUITINATION AT LYS-14 AND LYS-16 BY USP51</scope>
</reference>
<reference key="28">
    <citation type="journal article" date="2016" name="Mol. Cell">
        <title>Metabolic regulation of gene expression by histone lysine beta-hydroxybutyrylation.</title>
        <authorList>
            <person name="Xie Z."/>
            <person name="Zhang D."/>
            <person name="Chung D."/>
            <person name="Tang Z."/>
            <person name="Huang H."/>
            <person name="Dai L."/>
            <person name="Qi S."/>
            <person name="Li J."/>
            <person name="Colak G."/>
            <person name="Chen Y."/>
            <person name="Xia C."/>
            <person name="Peng C."/>
            <person name="Ruan H."/>
            <person name="Kirkey M."/>
            <person name="Wang D."/>
            <person name="Jensen L.M."/>
            <person name="Kwon O.K."/>
            <person name="Lee S."/>
            <person name="Pletcher S.D."/>
            <person name="Tan M."/>
            <person name="Lombard D.B."/>
            <person name="White K.P."/>
            <person name="Zhao H."/>
            <person name="Li J."/>
            <person name="Roeder R.G."/>
            <person name="Yang X."/>
            <person name="Zhao Y."/>
        </authorList>
    </citation>
    <scope>HYDROXYBUTYRYLATION AT LYS-10; LYS-14; LYS-37; LYS-96 AND LYS-119</scope>
</reference>
<reference key="29">
    <citation type="journal article" date="2019" name="Mol. Cell">
        <title>Glutarylation of histone H4 lysine 91 regulates chromatin dynamics.</title>
        <authorList>
            <person name="Bao X."/>
            <person name="Liu Z."/>
            <person name="Zhang W."/>
            <person name="Gladysz K."/>
            <person name="Fung Y.M.E."/>
            <person name="Tian G."/>
            <person name="Xiong Y."/>
            <person name="Wong J.W.H."/>
            <person name="Yuen K.W.Y."/>
            <person name="Li X.D."/>
        </authorList>
    </citation>
    <scope>GLUTARYLATION AT LYS-96; LYS-100; LYS-119 AND LYS-120</scope>
</reference>
<name>H2A2C_HUMAN</name>